<keyword id="KW-0131">Cell cycle</keyword>
<keyword id="KW-0132">Cell division</keyword>
<keyword id="KW-0137">Centromere</keyword>
<keyword id="KW-0158">Chromosome</keyword>
<keyword id="KW-0175">Coiled coil</keyword>
<keyword id="KW-0995">Kinetochore</keyword>
<keyword id="KW-0498">Mitosis</keyword>
<keyword id="KW-0539">Nucleus</keyword>
<keyword id="KW-1185">Reference proteome</keyword>
<protein>
    <recommendedName>
        <fullName>Probable kinetochore protein SPC25</fullName>
    </recommendedName>
</protein>
<accession>Q59PT6</accession>
<accession>A0A1D8PT32</accession>
<feature type="chain" id="PRO_0000246671" description="Probable kinetochore protein SPC25">
    <location>
        <begin position="1"/>
        <end position="239"/>
    </location>
</feature>
<feature type="coiled-coil region" evidence="3">
    <location>
        <begin position="19"/>
        <end position="139"/>
    </location>
</feature>
<gene>
    <name type="primary">SPC25</name>
    <name type="ordered locus">CAALFM_CR05840WA</name>
    <name type="ORF">CaO19.13949</name>
    <name type="ORF">CaO19.6628</name>
</gene>
<sequence length="239" mass="27936">MDTAERAYEKFQNQMIAFDNLKIEMNELAVDLDQQLSDKQSLILQQEQDHKQKVNDLTNQEYKLKLQAKSLKEKENATRDKLNLAMRSLEQQKSKVEDLVKKKQSLVDTKQDLESQIKQLETAIDQGTRELNKSNDNMSLQMNKNLVELNKYEIYTGLKIEVQSNELMCFKFFNLDPNDYDREFAITLNIGGSTYSIENTSPKLSDETVEQIQGKLNQGRQLSKFLKEVRTLFKDFVQY</sequence>
<name>SPC25_CANAL</name>
<proteinExistence type="inferred from homology"/>
<organism>
    <name type="scientific">Candida albicans (strain SC5314 / ATCC MYA-2876)</name>
    <name type="common">Yeast</name>
    <dbReference type="NCBI Taxonomy" id="237561"/>
    <lineage>
        <taxon>Eukaryota</taxon>
        <taxon>Fungi</taxon>
        <taxon>Dikarya</taxon>
        <taxon>Ascomycota</taxon>
        <taxon>Saccharomycotina</taxon>
        <taxon>Pichiomycetes</taxon>
        <taxon>Debaryomycetaceae</taxon>
        <taxon>Candida/Lodderomyces clade</taxon>
        <taxon>Candida</taxon>
    </lineage>
</organism>
<evidence type="ECO:0000250" key="1"/>
<evidence type="ECO:0000250" key="2">
    <source>
        <dbReference type="UniProtKB" id="P40014"/>
    </source>
</evidence>
<evidence type="ECO:0000255" key="3"/>
<evidence type="ECO:0000305" key="4"/>
<dbReference type="EMBL" id="CP017630">
    <property type="protein sequence ID" value="AOW31298.1"/>
    <property type="molecule type" value="Genomic_DNA"/>
</dbReference>
<dbReference type="RefSeq" id="XP_711694.1">
    <property type="nucleotide sequence ID" value="XM_706602.1"/>
</dbReference>
<dbReference type="SMR" id="Q59PT6"/>
<dbReference type="STRING" id="237561.Q59PT6"/>
<dbReference type="EnsemblFungi" id="CR_05840W_A-T">
    <property type="protein sequence ID" value="CR_05840W_A-T-p1"/>
    <property type="gene ID" value="CR_05840W_A"/>
</dbReference>
<dbReference type="GeneID" id="3646704"/>
<dbReference type="KEGG" id="cal:CAALFM_CR05840WA"/>
<dbReference type="CGD" id="CAL0000186415">
    <property type="gene designation" value="orf19.13949"/>
</dbReference>
<dbReference type="VEuPathDB" id="FungiDB:CR_05840W_A"/>
<dbReference type="eggNOG" id="KOG4657">
    <property type="taxonomic scope" value="Eukaryota"/>
</dbReference>
<dbReference type="HOGENOM" id="CLU_085127_0_0_1"/>
<dbReference type="InParanoid" id="Q59PT6"/>
<dbReference type="OMA" id="HEDQRMK"/>
<dbReference type="OrthoDB" id="4056921at2759"/>
<dbReference type="PRO" id="PR:Q59PT6"/>
<dbReference type="Proteomes" id="UP000000559">
    <property type="component" value="Chromosome R"/>
</dbReference>
<dbReference type="GO" id="GO:0031262">
    <property type="term" value="C:Ndc80 complex"/>
    <property type="evidence" value="ECO:0000250"/>
    <property type="project" value="UniProtKB"/>
</dbReference>
<dbReference type="GO" id="GO:0005634">
    <property type="term" value="C:nucleus"/>
    <property type="evidence" value="ECO:0007669"/>
    <property type="project" value="UniProtKB-SubCell"/>
</dbReference>
<dbReference type="GO" id="GO:0051301">
    <property type="term" value="P:cell division"/>
    <property type="evidence" value="ECO:0007669"/>
    <property type="project" value="UniProtKB-KW"/>
</dbReference>
<dbReference type="GO" id="GO:0007059">
    <property type="term" value="P:chromosome segregation"/>
    <property type="evidence" value="ECO:0000318"/>
    <property type="project" value="GO_Central"/>
</dbReference>
<dbReference type="CDD" id="cd23784">
    <property type="entry name" value="RWD_Spc25"/>
    <property type="match status" value="1"/>
</dbReference>
<dbReference type="FunFam" id="3.30.457.50:FF:000008">
    <property type="match status" value="1"/>
</dbReference>
<dbReference type="Gene3D" id="3.30.457.50">
    <property type="entry name" value="Chromosome segregation protein Spc25"/>
    <property type="match status" value="1"/>
</dbReference>
<dbReference type="InterPro" id="IPR045143">
    <property type="entry name" value="Spc25"/>
</dbReference>
<dbReference type="InterPro" id="IPR013255">
    <property type="entry name" value="Spc25_C"/>
</dbReference>
<dbReference type="PANTHER" id="PTHR14281:SF0">
    <property type="entry name" value="KINETOCHORE PROTEIN SPC25"/>
    <property type="match status" value="1"/>
</dbReference>
<dbReference type="PANTHER" id="PTHR14281">
    <property type="entry name" value="KINETOCHORE PROTEIN SPC25-RELATED"/>
    <property type="match status" value="1"/>
</dbReference>
<dbReference type="Pfam" id="PF08234">
    <property type="entry name" value="Spindle_Spc25"/>
    <property type="match status" value="1"/>
</dbReference>
<reference key="1">
    <citation type="journal article" date="2004" name="Proc. Natl. Acad. Sci. U.S.A.">
        <title>The diploid genome sequence of Candida albicans.</title>
        <authorList>
            <person name="Jones T."/>
            <person name="Federspiel N.A."/>
            <person name="Chibana H."/>
            <person name="Dungan J."/>
            <person name="Kalman S."/>
            <person name="Magee B.B."/>
            <person name="Newport G."/>
            <person name="Thorstenson Y.R."/>
            <person name="Agabian N."/>
            <person name="Magee P.T."/>
            <person name="Davis R.W."/>
            <person name="Scherer S."/>
        </authorList>
    </citation>
    <scope>NUCLEOTIDE SEQUENCE [LARGE SCALE GENOMIC DNA]</scope>
    <source>
        <strain>SC5314 / ATCC MYA-2876</strain>
    </source>
</reference>
<reference key="2">
    <citation type="journal article" date="2007" name="Genome Biol.">
        <title>Assembly of the Candida albicans genome into sixteen supercontigs aligned on the eight chromosomes.</title>
        <authorList>
            <person name="van het Hoog M."/>
            <person name="Rast T.J."/>
            <person name="Martchenko M."/>
            <person name="Grindle S."/>
            <person name="Dignard D."/>
            <person name="Hogues H."/>
            <person name="Cuomo C."/>
            <person name="Berriman M."/>
            <person name="Scherer S."/>
            <person name="Magee B.B."/>
            <person name="Whiteway M."/>
            <person name="Chibana H."/>
            <person name="Nantel A."/>
            <person name="Magee P.T."/>
        </authorList>
    </citation>
    <scope>GENOME REANNOTATION</scope>
    <source>
        <strain>SC5314 / ATCC MYA-2876</strain>
    </source>
</reference>
<reference key="3">
    <citation type="journal article" date="2013" name="Genome Biol.">
        <title>Assembly of a phased diploid Candida albicans genome facilitates allele-specific measurements and provides a simple model for repeat and indel structure.</title>
        <authorList>
            <person name="Muzzey D."/>
            <person name="Schwartz K."/>
            <person name="Weissman J.S."/>
            <person name="Sherlock G."/>
        </authorList>
    </citation>
    <scope>NUCLEOTIDE SEQUENCE [LARGE SCALE GENOMIC DNA]</scope>
    <scope>GENOME REANNOTATION</scope>
    <source>
        <strain>SC5314 / ATCC MYA-2876</strain>
    </source>
</reference>
<comment type="function">
    <text evidence="1">Acts as a component of the essential kinetochore-associated NDC80 complex, which is required for chromosome segregation and spindle checkpoint activity.</text>
</comment>
<comment type="subunit">
    <text evidence="1">Component of the NDC80 complex, which consists of NDC80, NUF2, SPC24 and SPC25.</text>
</comment>
<comment type="subcellular location">
    <subcellularLocation>
        <location evidence="2">Nucleus</location>
    </subcellularLocation>
    <subcellularLocation>
        <location evidence="2">Chromosome</location>
        <location evidence="2">Centromere</location>
        <location evidence="2">Kinetochore</location>
    </subcellularLocation>
    <text evidence="2">Associated with kinetochores.</text>
</comment>
<comment type="similarity">
    <text evidence="4">Belongs to the SPC25 family.</text>
</comment>